<feature type="chain" id="PRO_0000400241" description="Mycothiol acetyltransferase">
    <location>
        <begin position="1"/>
        <end position="297"/>
    </location>
</feature>
<feature type="domain" description="N-acetyltransferase" evidence="1">
    <location>
        <begin position="155"/>
        <end position="297"/>
    </location>
</feature>
<feature type="binding site" evidence="1">
    <location>
        <position position="35"/>
    </location>
    <ligand>
        <name>1D-myo-inositol 2-(L-cysteinylamino)-2-deoxy-alpha-D-glucopyranoside</name>
        <dbReference type="ChEBI" id="CHEBI:58887"/>
    </ligand>
</feature>
<feature type="binding site">
    <location>
        <begin position="73"/>
        <end position="75"/>
    </location>
    <ligand>
        <name>acetyl-CoA</name>
        <dbReference type="ChEBI" id="CHEBI:57288"/>
        <label>1</label>
    </ligand>
</feature>
<feature type="binding site" evidence="1">
    <location>
        <position position="181"/>
    </location>
    <ligand>
        <name>1D-myo-inositol 2-(L-cysteinylamino)-2-deoxy-alpha-D-glucopyranoside</name>
        <dbReference type="ChEBI" id="CHEBI:58887"/>
    </ligand>
</feature>
<feature type="binding site" evidence="1">
    <location>
        <position position="222"/>
    </location>
    <ligand>
        <name>1D-myo-inositol 2-(L-cysteinylamino)-2-deoxy-alpha-D-glucopyranoside</name>
        <dbReference type="ChEBI" id="CHEBI:58887"/>
    </ligand>
</feature>
<feature type="binding site" evidence="1">
    <location>
        <position position="230"/>
    </location>
    <ligand>
        <name>1D-myo-inositol 2-(L-cysteinylamino)-2-deoxy-alpha-D-glucopyranoside</name>
        <dbReference type="ChEBI" id="CHEBI:58887"/>
    </ligand>
</feature>
<feature type="binding site" evidence="1">
    <location>
        <begin position="234"/>
        <end position="236"/>
    </location>
    <ligand>
        <name>acetyl-CoA</name>
        <dbReference type="ChEBI" id="CHEBI:57288"/>
        <label>2</label>
    </ligand>
</feature>
<feature type="binding site" evidence="1">
    <location>
        <begin position="241"/>
        <end position="247"/>
    </location>
    <ligand>
        <name>acetyl-CoA</name>
        <dbReference type="ChEBI" id="CHEBI:57288"/>
        <label>2</label>
    </ligand>
</feature>
<feature type="binding site" evidence="1">
    <location>
        <position position="268"/>
    </location>
    <ligand>
        <name>1D-myo-inositol 2-(L-cysteinylamino)-2-deoxy-alpha-D-glucopyranoside</name>
        <dbReference type="ChEBI" id="CHEBI:58887"/>
    </ligand>
</feature>
<gene>
    <name evidence="1" type="primary">mshD</name>
    <name type="ordered locus">Bcav_3429</name>
</gene>
<keyword id="KW-0012">Acyltransferase</keyword>
<keyword id="KW-1185">Reference proteome</keyword>
<keyword id="KW-0677">Repeat</keyword>
<keyword id="KW-0808">Transferase</keyword>
<sequence>MQAYDDEIVGTALASNVLALADRVRTADGVEALSEQHRLALEHPGLRAHHLVVTDPAGAVVGYASVLGSSVEMLVDAAHRGEGVGHRLAEAALAVEPTLAFWAHGDLPGAAQLAEAIGLRRVRELWHLGRDLAPAGAGGDEAALLATPLPGGERLRTFGGTEAEEHAWLALNARAFASHPEQGAMTLEDLRVREGETWFDPSLLWLVHDDGDGALLASMWLKVPDAATGEIYVLGVDPGAQGRGLGRALTDRALDVLRARGVDRVELYVEGENARARALYEHSGFTPVAVHAQYGIP</sequence>
<name>MSHD_BEUC1</name>
<dbReference type="EC" id="2.3.1.189" evidence="1"/>
<dbReference type="EMBL" id="CP001618">
    <property type="protein sequence ID" value="ACQ81671.1"/>
    <property type="molecule type" value="Genomic_DNA"/>
</dbReference>
<dbReference type="RefSeq" id="WP_015883908.1">
    <property type="nucleotide sequence ID" value="NC_012669.1"/>
</dbReference>
<dbReference type="SMR" id="C5C246"/>
<dbReference type="STRING" id="471853.Bcav_3429"/>
<dbReference type="KEGG" id="bcv:Bcav_3429"/>
<dbReference type="eggNOG" id="COG0456">
    <property type="taxonomic scope" value="Bacteria"/>
</dbReference>
<dbReference type="HOGENOM" id="CLU_068014_0_0_11"/>
<dbReference type="OrthoDB" id="3208058at2"/>
<dbReference type="Proteomes" id="UP000007962">
    <property type="component" value="Chromosome"/>
</dbReference>
<dbReference type="GO" id="GO:0035447">
    <property type="term" value="F:mycothiol synthase activity"/>
    <property type="evidence" value="ECO:0007669"/>
    <property type="project" value="UniProtKB-UniRule"/>
</dbReference>
<dbReference type="GO" id="GO:0010125">
    <property type="term" value="P:mycothiol biosynthetic process"/>
    <property type="evidence" value="ECO:0007669"/>
    <property type="project" value="UniProtKB-UniRule"/>
</dbReference>
<dbReference type="CDD" id="cd04301">
    <property type="entry name" value="NAT_SF"/>
    <property type="match status" value="1"/>
</dbReference>
<dbReference type="Gene3D" id="3.40.630.30">
    <property type="match status" value="1"/>
</dbReference>
<dbReference type="HAMAP" id="MF_01698">
    <property type="entry name" value="MshD"/>
    <property type="match status" value="1"/>
</dbReference>
<dbReference type="InterPro" id="IPR016181">
    <property type="entry name" value="Acyl_CoA_acyltransferase"/>
</dbReference>
<dbReference type="InterPro" id="IPR000182">
    <property type="entry name" value="GNAT_dom"/>
</dbReference>
<dbReference type="InterPro" id="IPR017813">
    <property type="entry name" value="Mycothiol_AcTrfase"/>
</dbReference>
<dbReference type="NCBIfam" id="TIGR03448">
    <property type="entry name" value="mycothiol_MshD"/>
    <property type="match status" value="1"/>
</dbReference>
<dbReference type="PANTHER" id="PTHR43072:SF51">
    <property type="entry name" value="ABC SUPERFAMILY TRANSPORT PROTEIN"/>
    <property type="match status" value="1"/>
</dbReference>
<dbReference type="PANTHER" id="PTHR43072">
    <property type="entry name" value="N-ACETYLTRANSFERASE"/>
    <property type="match status" value="1"/>
</dbReference>
<dbReference type="Pfam" id="PF00583">
    <property type="entry name" value="Acetyltransf_1"/>
    <property type="match status" value="1"/>
</dbReference>
<dbReference type="PIRSF" id="PIRSF021524">
    <property type="entry name" value="MSH_acetyltransferase"/>
    <property type="match status" value="1"/>
</dbReference>
<dbReference type="SUPFAM" id="SSF55729">
    <property type="entry name" value="Acyl-CoA N-acyltransferases (Nat)"/>
    <property type="match status" value="1"/>
</dbReference>
<dbReference type="PROSITE" id="PS51186">
    <property type="entry name" value="GNAT"/>
    <property type="match status" value="1"/>
</dbReference>
<proteinExistence type="inferred from homology"/>
<reference key="1">
    <citation type="journal article" date="2009" name="Stand. Genomic Sci.">
        <title>Complete genome sequence of Beutenbergia cavernae type strain (HKI 0122).</title>
        <authorList>
            <person name="Land M."/>
            <person name="Pukall R."/>
            <person name="Abt B."/>
            <person name="Goker M."/>
            <person name="Rohde M."/>
            <person name="Glavina Del Rio T."/>
            <person name="Tice H."/>
            <person name="Copeland A."/>
            <person name="Cheng J.F."/>
            <person name="Lucas S."/>
            <person name="Chen F."/>
            <person name="Nolan M."/>
            <person name="Bruce D."/>
            <person name="Goodwin L."/>
            <person name="Pitluck S."/>
            <person name="Ivanova N."/>
            <person name="Mavromatis K."/>
            <person name="Ovchinnikova G."/>
            <person name="Pati A."/>
            <person name="Chen A."/>
            <person name="Palaniappan K."/>
            <person name="Hauser L."/>
            <person name="Chang Y.J."/>
            <person name="Jefferies C.C."/>
            <person name="Saunders E."/>
            <person name="Brettin T."/>
            <person name="Detter J.C."/>
            <person name="Han C."/>
            <person name="Chain P."/>
            <person name="Bristow J."/>
            <person name="Eisen J.A."/>
            <person name="Markowitz V."/>
            <person name="Hugenholtz P."/>
            <person name="Kyrpides N.C."/>
            <person name="Klenk H.P."/>
            <person name="Lapidus A."/>
        </authorList>
    </citation>
    <scope>NUCLEOTIDE SEQUENCE [LARGE SCALE GENOMIC DNA]</scope>
    <source>
        <strain>ATCC BAA-8 / DSM 12333 / CCUG 43141 / JCM 11478 / NBRC 16432 / NCIMB 13614 / HKI 0122</strain>
    </source>
</reference>
<accession>C5C246</accession>
<protein>
    <recommendedName>
        <fullName evidence="1">Mycothiol acetyltransferase</fullName>
        <shortName evidence="1">MSH acetyltransferase</shortName>
        <ecNumber evidence="1">2.3.1.189</ecNumber>
    </recommendedName>
    <alternativeName>
        <fullName evidence="1">Mycothiol synthase</fullName>
    </alternativeName>
</protein>
<comment type="function">
    <text evidence="1">Catalyzes the transfer of acetyl from acetyl-CoA to desacetylmycothiol (Cys-GlcN-Ins) to form mycothiol.</text>
</comment>
<comment type="catalytic activity">
    <reaction evidence="1">
        <text>1D-myo-inositol 2-(L-cysteinylamino)-2-deoxy-alpha-D-glucopyranoside + acetyl-CoA = mycothiol + CoA + H(+)</text>
        <dbReference type="Rhea" id="RHEA:26172"/>
        <dbReference type="ChEBI" id="CHEBI:15378"/>
        <dbReference type="ChEBI" id="CHEBI:16768"/>
        <dbReference type="ChEBI" id="CHEBI:57287"/>
        <dbReference type="ChEBI" id="CHEBI:57288"/>
        <dbReference type="ChEBI" id="CHEBI:58887"/>
        <dbReference type="EC" id="2.3.1.189"/>
    </reaction>
</comment>
<comment type="subunit">
    <text evidence="1">Monomer.</text>
</comment>
<comment type="similarity">
    <text evidence="1">Belongs to the acetyltransferase family. MshD subfamily.</text>
</comment>
<evidence type="ECO:0000255" key="1">
    <source>
        <dbReference type="HAMAP-Rule" id="MF_01698"/>
    </source>
</evidence>
<organism>
    <name type="scientific">Beutenbergia cavernae (strain ATCC BAA-8 / DSM 12333 / CCUG 43141 / JCM 11478 / NBRC 16432 / NCIMB 13614 / HKI 0122)</name>
    <dbReference type="NCBI Taxonomy" id="471853"/>
    <lineage>
        <taxon>Bacteria</taxon>
        <taxon>Bacillati</taxon>
        <taxon>Actinomycetota</taxon>
        <taxon>Actinomycetes</taxon>
        <taxon>Micrococcales</taxon>
        <taxon>Beutenbergiaceae</taxon>
        <taxon>Beutenbergia</taxon>
    </lineage>
</organism>